<comment type="similarity">
    <text evidence="1">Belongs to the FwdC/FmdC family.</text>
</comment>
<feature type="chain" id="PRO_0000144200" description="Uncharacterized protein MJ1350">
    <location>
        <begin position="1"/>
        <end position="261"/>
    </location>
</feature>
<dbReference type="EMBL" id="L77117">
    <property type="protein sequence ID" value="AAB99361.1"/>
    <property type="molecule type" value="Genomic_DNA"/>
</dbReference>
<dbReference type="PIR" id="E64468">
    <property type="entry name" value="E64468"/>
</dbReference>
<dbReference type="SMR" id="Q58745"/>
<dbReference type="FunCoup" id="Q58745">
    <property type="interactions" value="2"/>
</dbReference>
<dbReference type="STRING" id="243232.MJ_1350"/>
<dbReference type="PaxDb" id="243232-MJ_1350"/>
<dbReference type="EnsemblBacteria" id="AAB99361">
    <property type="protein sequence ID" value="AAB99361"/>
    <property type="gene ID" value="MJ_1350"/>
</dbReference>
<dbReference type="KEGG" id="mja:MJ_1350"/>
<dbReference type="eggNOG" id="arCOG00096">
    <property type="taxonomic scope" value="Archaea"/>
</dbReference>
<dbReference type="HOGENOM" id="CLU_078510_1_0_2"/>
<dbReference type="InParanoid" id="Q58745"/>
<dbReference type="PhylomeDB" id="Q58745"/>
<dbReference type="Proteomes" id="UP000000805">
    <property type="component" value="Chromosome"/>
</dbReference>
<dbReference type="GO" id="GO:0016491">
    <property type="term" value="F:oxidoreductase activity"/>
    <property type="evidence" value="ECO:0007669"/>
    <property type="project" value="InterPro"/>
</dbReference>
<dbReference type="CDD" id="cd00981">
    <property type="entry name" value="arch_gltB"/>
    <property type="match status" value="1"/>
</dbReference>
<dbReference type="Gene3D" id="2.160.20.60">
    <property type="entry name" value="Glutamate synthase, alpha subunit, C-terminal domain"/>
    <property type="match status" value="1"/>
</dbReference>
<dbReference type="InterPro" id="IPR035710">
    <property type="entry name" value="Archaeal_gltB"/>
</dbReference>
<dbReference type="InterPro" id="IPR002489">
    <property type="entry name" value="Glu_synth_asu_C"/>
</dbReference>
<dbReference type="InterPro" id="IPR036485">
    <property type="entry name" value="Glu_synth_asu_C_sf"/>
</dbReference>
<dbReference type="InterPro" id="IPR012061">
    <property type="entry name" value="Glu_synth_lsu_3"/>
</dbReference>
<dbReference type="PANTHER" id="PTHR39673:SF8">
    <property type="entry name" value="GLUTAMATE SYNTHASE ALPHA SUBUNIT C-TERMINAL DOMAIN-CONTAINING PROTEIN"/>
    <property type="match status" value="1"/>
</dbReference>
<dbReference type="PANTHER" id="PTHR39673">
    <property type="entry name" value="TUNGSTEN FORMYLMETHANOFURAN DEHYDROGENASE, SUBUNIT C (FWDC)"/>
    <property type="match status" value="1"/>
</dbReference>
<dbReference type="Pfam" id="PF01493">
    <property type="entry name" value="GXGXG"/>
    <property type="match status" value="1"/>
</dbReference>
<dbReference type="PIRSF" id="PIRSF006519">
    <property type="entry name" value="GOGAT_dom3"/>
    <property type="match status" value="1"/>
</dbReference>
<dbReference type="SUPFAM" id="SSF69336">
    <property type="entry name" value="Alpha subunit of glutamate synthase, C-terminal domain"/>
    <property type="match status" value="1"/>
</dbReference>
<name>Y1350_METJA</name>
<protein>
    <recommendedName>
        <fullName>Uncharacterized protein MJ1350</fullName>
    </recommendedName>
</protein>
<sequence>MKGMEEVVIDAKDMHYRELNEKIHEILRENPDIKKIVLKNVLGQRFIADGIQKKDLTIEIYGIPGGDLGMFMSGPTIIVHGNAEFAPGNTMDDGTIVIYGSSGDVTAHSMRGGKVFVRGDVGYRSGIHMKAYKDKVPVLVIGGRAKDFLGEYMAGGIIIVLNIDEKGNDLGKVKGRMIGTGIHGGAIYIRGEIDKDQLGVAADIKEFTEEDLEKIKPYIEEFCKWFNLPEDVKNKLLNSKWTKIAPISKRPFGKLYTPDLM</sequence>
<accession>Q58745</accession>
<gene>
    <name type="ordered locus">MJ1350</name>
</gene>
<keyword id="KW-1185">Reference proteome</keyword>
<reference key="1">
    <citation type="journal article" date="1996" name="Science">
        <title>Complete genome sequence of the methanogenic archaeon, Methanococcus jannaschii.</title>
        <authorList>
            <person name="Bult C.J."/>
            <person name="White O."/>
            <person name="Olsen G.J."/>
            <person name="Zhou L."/>
            <person name="Fleischmann R.D."/>
            <person name="Sutton G.G."/>
            <person name="Blake J.A."/>
            <person name="FitzGerald L.M."/>
            <person name="Clayton R.A."/>
            <person name="Gocayne J.D."/>
            <person name="Kerlavage A.R."/>
            <person name="Dougherty B.A."/>
            <person name="Tomb J.-F."/>
            <person name="Adams M.D."/>
            <person name="Reich C.I."/>
            <person name="Overbeek R."/>
            <person name="Kirkness E.F."/>
            <person name="Weinstock K.G."/>
            <person name="Merrick J.M."/>
            <person name="Glodek A."/>
            <person name="Scott J.L."/>
            <person name="Geoghagen N.S.M."/>
            <person name="Weidman J.F."/>
            <person name="Fuhrmann J.L."/>
            <person name="Nguyen D."/>
            <person name="Utterback T.R."/>
            <person name="Kelley J.M."/>
            <person name="Peterson J.D."/>
            <person name="Sadow P.W."/>
            <person name="Hanna M.C."/>
            <person name="Cotton M.D."/>
            <person name="Roberts K.M."/>
            <person name="Hurst M.A."/>
            <person name="Kaine B.P."/>
            <person name="Borodovsky M."/>
            <person name="Klenk H.-P."/>
            <person name="Fraser C.M."/>
            <person name="Smith H.O."/>
            <person name="Woese C.R."/>
            <person name="Venter J.C."/>
        </authorList>
    </citation>
    <scope>NUCLEOTIDE SEQUENCE [LARGE SCALE GENOMIC DNA]</scope>
    <source>
        <strain>ATCC 43067 / DSM 2661 / JAL-1 / JCM 10045 / NBRC 100440</strain>
    </source>
</reference>
<evidence type="ECO:0000305" key="1"/>
<proteinExistence type="inferred from homology"/>
<organism>
    <name type="scientific">Methanocaldococcus jannaschii (strain ATCC 43067 / DSM 2661 / JAL-1 / JCM 10045 / NBRC 100440)</name>
    <name type="common">Methanococcus jannaschii</name>
    <dbReference type="NCBI Taxonomy" id="243232"/>
    <lineage>
        <taxon>Archaea</taxon>
        <taxon>Methanobacteriati</taxon>
        <taxon>Methanobacteriota</taxon>
        <taxon>Methanomada group</taxon>
        <taxon>Methanococci</taxon>
        <taxon>Methanococcales</taxon>
        <taxon>Methanocaldococcaceae</taxon>
        <taxon>Methanocaldococcus</taxon>
    </lineage>
</organism>